<feature type="chain" id="PRO_0000337191" description="Transcription factor IIIB 50 kDa subunit">
    <location>
        <begin position="1"/>
        <end position="423"/>
    </location>
</feature>
<feature type="repeat" description="2">
    <location>
        <begin position="171"/>
        <end position="245"/>
    </location>
</feature>
<feature type="zinc finger region" description="TFIIB-type" evidence="2">
    <location>
        <begin position="1"/>
        <end position="34"/>
    </location>
</feature>
<feature type="region of interest" description="Disordered" evidence="3">
    <location>
        <begin position="325"/>
        <end position="358"/>
    </location>
</feature>
<feature type="compositionally biased region" description="Low complexity" evidence="3">
    <location>
        <begin position="325"/>
        <end position="340"/>
    </location>
</feature>
<feature type="binding site" evidence="2">
    <location>
        <position position="5"/>
    </location>
    <ligand>
        <name>Zn(2+)</name>
        <dbReference type="ChEBI" id="CHEBI:29105"/>
    </ligand>
</feature>
<feature type="binding site" evidence="2">
    <location>
        <position position="8"/>
    </location>
    <ligand>
        <name>Zn(2+)</name>
        <dbReference type="ChEBI" id="CHEBI:29105"/>
    </ligand>
</feature>
<feature type="binding site" evidence="2">
    <location>
        <position position="26"/>
    </location>
    <ligand>
        <name>Zn(2+)</name>
        <dbReference type="ChEBI" id="CHEBI:29105"/>
    </ligand>
</feature>
<feature type="binding site" evidence="2">
    <location>
        <position position="29"/>
    </location>
    <ligand>
        <name>Zn(2+)</name>
        <dbReference type="ChEBI" id="CHEBI:29105"/>
    </ligand>
</feature>
<feature type="modified residue" description="Cysteine sulfenic acid (-SOH)" evidence="1">
    <location>
        <position position="373"/>
    </location>
</feature>
<feature type="sequence conflict" description="In Ref. 1; AAH78247." evidence="4" ref="1">
    <original>L</original>
    <variation>M</variation>
    <location>
        <position position="312"/>
    </location>
</feature>
<gene>
    <name type="primary">brf2</name>
    <name type="ORF">zgc:100856</name>
</gene>
<organism>
    <name type="scientific">Danio rerio</name>
    <name type="common">Zebrafish</name>
    <name type="synonym">Brachydanio rerio</name>
    <dbReference type="NCBI Taxonomy" id="7955"/>
    <lineage>
        <taxon>Eukaryota</taxon>
        <taxon>Metazoa</taxon>
        <taxon>Chordata</taxon>
        <taxon>Craniata</taxon>
        <taxon>Vertebrata</taxon>
        <taxon>Euteleostomi</taxon>
        <taxon>Actinopterygii</taxon>
        <taxon>Neopterygii</taxon>
        <taxon>Teleostei</taxon>
        <taxon>Ostariophysi</taxon>
        <taxon>Cypriniformes</taxon>
        <taxon>Danionidae</taxon>
        <taxon>Danioninae</taxon>
        <taxon>Danio</taxon>
    </lineage>
</organism>
<dbReference type="EMBL" id="BC078247">
    <property type="protein sequence ID" value="AAH78247.1"/>
    <property type="molecule type" value="mRNA"/>
</dbReference>
<dbReference type="EMBL" id="BC154287">
    <property type="protein sequence ID" value="AAI54288.1"/>
    <property type="molecule type" value="mRNA"/>
</dbReference>
<dbReference type="RefSeq" id="NP_001003536.1">
    <property type="nucleotide sequence ID" value="NM_001003536.1"/>
</dbReference>
<dbReference type="SMR" id="A8KBY2"/>
<dbReference type="FunCoup" id="A8KBY2">
    <property type="interactions" value="303"/>
</dbReference>
<dbReference type="STRING" id="7955.ENSDARP00000130569"/>
<dbReference type="PaxDb" id="7955-ENSDARP00000006590"/>
<dbReference type="GeneID" id="445142"/>
<dbReference type="KEGG" id="dre:445142"/>
<dbReference type="AGR" id="ZFIN:ZDB-GENE-040801-43"/>
<dbReference type="CTD" id="55290"/>
<dbReference type="ZFIN" id="ZDB-GENE-040801-43">
    <property type="gene designation" value="brf2"/>
</dbReference>
<dbReference type="eggNOG" id="KOG1598">
    <property type="taxonomic scope" value="Eukaryota"/>
</dbReference>
<dbReference type="InParanoid" id="A8KBY2"/>
<dbReference type="OrthoDB" id="2121711at2759"/>
<dbReference type="PhylomeDB" id="A8KBY2"/>
<dbReference type="PRO" id="PR:A8KBY2"/>
<dbReference type="Proteomes" id="UP000000437">
    <property type="component" value="Chromosome 10"/>
</dbReference>
<dbReference type="GO" id="GO:0005634">
    <property type="term" value="C:nucleus"/>
    <property type="evidence" value="ECO:0000318"/>
    <property type="project" value="GO_Central"/>
</dbReference>
<dbReference type="GO" id="GO:0000126">
    <property type="term" value="C:transcription factor TFIIIB complex"/>
    <property type="evidence" value="ECO:0000250"/>
    <property type="project" value="UniProtKB"/>
</dbReference>
<dbReference type="GO" id="GO:0097550">
    <property type="term" value="C:transcription preinitiation complex"/>
    <property type="evidence" value="ECO:0000318"/>
    <property type="project" value="GO_Central"/>
</dbReference>
<dbReference type="GO" id="GO:0016251">
    <property type="term" value="F:RNA polymerase II general transcription initiation factor activity"/>
    <property type="evidence" value="ECO:0000318"/>
    <property type="project" value="GO_Central"/>
</dbReference>
<dbReference type="GO" id="GO:0001006">
    <property type="term" value="F:RNA polymerase III type 3 promoter sequence-specific DNA binding"/>
    <property type="evidence" value="ECO:0000250"/>
    <property type="project" value="UniProtKB"/>
</dbReference>
<dbReference type="GO" id="GO:0017025">
    <property type="term" value="F:TBP-class protein binding"/>
    <property type="evidence" value="ECO:0000318"/>
    <property type="project" value="GO_Central"/>
</dbReference>
<dbReference type="GO" id="GO:0008270">
    <property type="term" value="F:zinc ion binding"/>
    <property type="evidence" value="ECO:0007669"/>
    <property type="project" value="UniProtKB-KW"/>
</dbReference>
<dbReference type="GO" id="GO:0034599">
    <property type="term" value="P:cellular response to oxidative stress"/>
    <property type="evidence" value="ECO:0000250"/>
    <property type="project" value="UniProtKB"/>
</dbReference>
<dbReference type="GO" id="GO:0006359">
    <property type="term" value="P:regulation of transcription by RNA polymerase III"/>
    <property type="evidence" value="ECO:0000250"/>
    <property type="project" value="UniProtKB"/>
</dbReference>
<dbReference type="GO" id="GO:0070897">
    <property type="term" value="P:transcription preinitiation complex assembly"/>
    <property type="evidence" value="ECO:0007669"/>
    <property type="project" value="InterPro"/>
</dbReference>
<dbReference type="CDD" id="cd20555">
    <property type="entry name" value="CYCLIN_BRF2"/>
    <property type="match status" value="1"/>
</dbReference>
<dbReference type="FunFam" id="1.10.472.10:FF:000223">
    <property type="entry name" value="BRF2, RNA polymerase III transcription initiation factor subunit"/>
    <property type="match status" value="1"/>
</dbReference>
<dbReference type="FunFam" id="2.20.25.10:FF:000014">
    <property type="entry name" value="Transcription factor IIIB 50 kDa subunit"/>
    <property type="match status" value="1"/>
</dbReference>
<dbReference type="Gene3D" id="2.20.25.10">
    <property type="match status" value="1"/>
</dbReference>
<dbReference type="Gene3D" id="1.10.472.10">
    <property type="entry name" value="Cyclin-like"/>
    <property type="match status" value="2"/>
</dbReference>
<dbReference type="InterPro" id="IPR054078">
    <property type="entry name" value="BRF2-like_C"/>
</dbReference>
<dbReference type="InterPro" id="IPR036915">
    <property type="entry name" value="Cyclin-like_sf"/>
</dbReference>
<dbReference type="InterPro" id="IPR000812">
    <property type="entry name" value="TFIIB"/>
</dbReference>
<dbReference type="InterPro" id="IPR013137">
    <property type="entry name" value="Znf_TFIIB"/>
</dbReference>
<dbReference type="PANTHER" id="PTHR11618:SF5">
    <property type="entry name" value="TRANSCRIPTION FACTOR IIIB 50 KDA SUBUNIT"/>
    <property type="match status" value="1"/>
</dbReference>
<dbReference type="PANTHER" id="PTHR11618">
    <property type="entry name" value="TRANSCRIPTION INITIATION FACTOR IIB-RELATED"/>
    <property type="match status" value="1"/>
</dbReference>
<dbReference type="Pfam" id="PF21886">
    <property type="entry name" value="BRF2-like_C_cyclin_rpt"/>
    <property type="match status" value="1"/>
</dbReference>
<dbReference type="Pfam" id="PF08271">
    <property type="entry name" value="Zn_Ribbon_TF"/>
    <property type="match status" value="1"/>
</dbReference>
<dbReference type="SUPFAM" id="SSF47954">
    <property type="entry name" value="Cyclin-like"/>
    <property type="match status" value="2"/>
</dbReference>
<dbReference type="SUPFAM" id="SSF57783">
    <property type="entry name" value="Zinc beta-ribbon"/>
    <property type="match status" value="1"/>
</dbReference>
<dbReference type="PROSITE" id="PS51134">
    <property type="entry name" value="ZF_TFIIB"/>
    <property type="match status" value="1"/>
</dbReference>
<keyword id="KW-0010">Activator</keyword>
<keyword id="KW-0479">Metal-binding</keyword>
<keyword id="KW-0539">Nucleus</keyword>
<keyword id="KW-0558">Oxidation</keyword>
<keyword id="KW-1185">Reference proteome</keyword>
<keyword id="KW-0677">Repeat</keyword>
<keyword id="KW-0804">Transcription</keyword>
<keyword id="KW-0805">Transcription regulation</keyword>
<keyword id="KW-0862">Zinc</keyword>
<keyword id="KW-0863">Zinc-finger</keyword>
<name>BRF2_DANRE</name>
<reference key="1">
    <citation type="submission" date="2004-07" db="EMBL/GenBank/DDBJ databases">
        <authorList>
            <consortium name="NIH - Zebrafish Gene Collection (ZGC) project"/>
        </authorList>
    </citation>
    <scope>NUCLEOTIDE SEQUENCE [LARGE SCALE MRNA]</scope>
    <source>
        <tissue>Embryo</tissue>
    </source>
</reference>
<protein>
    <recommendedName>
        <fullName>Transcription factor IIIB 50 kDa subunit</fullName>
    </recommendedName>
    <alternativeName>
        <fullName>B-related factor 2</fullName>
        <shortName>BRF-2</shortName>
    </alternativeName>
</protein>
<sequence>MSKNCPECGSSRVVEDDLYSQKQWVCEDCGSVVSEGLLTTTLSEESHSRAVPFFTSTAAFKKPCRNLVSGFSRLRALCRIFRLSSSMEDASANLFERAYNHPNFLHISLSKKQILAGCCMFHICRQNSWPVFMGTIGYLLDADNYQMGTIYQELTKSLNLQTTQVCITRMLESFCYDFKLAPDEVEEVFSVAQQRLVDQTSALLELAADTWILTGRRPFPLFLAAVYVAWQSLNPLARMKYSLMKFCKIAKAPEQLWCKSKDTINKRLNELLEVLCKLGRELPWVRPTDIQMNTVTTLVEDILKHRKALLILAVKHYEKQLEETQTSQYSESELSDSKSSVQTQCKSPPDEEDEGCELPPDHWGKRHLFLPPCVRTQKRQKINEAPLEVTGDEDISDSEIESYIRSEEEIKLFAKARKKICKY</sequence>
<proteinExistence type="evidence at transcript level"/>
<evidence type="ECO:0000250" key="1">
    <source>
        <dbReference type="UniProtKB" id="Q9HAW0"/>
    </source>
</evidence>
<evidence type="ECO:0000255" key="2">
    <source>
        <dbReference type="PROSITE-ProRule" id="PRU00469"/>
    </source>
</evidence>
<evidence type="ECO:0000256" key="3">
    <source>
        <dbReference type="SAM" id="MobiDB-lite"/>
    </source>
</evidence>
<evidence type="ECO:0000305" key="4"/>
<accession>A8KBY2</accession>
<accession>Q6DC40</accession>
<comment type="function">
    <text evidence="1">General activator of RNA polymerase III transcription. Factor exclusively required for RNA polymerase III transcription of genes with promoter elements upstream of the initiation sites. Contributes to the regulation of gene expression; functions as activator in the absence of oxidative stress. Down-regulates expression of target genes in response to oxidative stress. Overexpression protects cells against apoptosis in response to oxidative stress.</text>
</comment>
<comment type="subunit">
    <text evidence="1">Component of TFIIIB complexes. Interacts with TBP and forms a ternary complex with TBp and target DNA sequences.</text>
</comment>
<comment type="subcellular location">
    <subcellularLocation>
        <location evidence="1">Nucleus</location>
    </subcellularLocation>
</comment>
<comment type="PTM">
    <text evidence="1">In response to oxidative stress, a Cys-residue is reversibly oxidized to cysteine sulfenic acid. This impairs formation of a ternary complex with TBP and DNA and down-regulates expression of target genes in response to oxidative stress.</text>
</comment>
<comment type="similarity">
    <text evidence="4">Belongs to the TFIIB family.</text>
</comment>